<sequence>MDSGPLWDANPTPRGTLSAPNATTPWLGRDEELAKVEIGVLATVLVLATGGNLAVLLTLGQLGRKRSRMHLFVLHLALTDLAVALFQVLPQLLWDITYRFQGPDLLCRAVKYLQVLSMFASTYMLLAMTLDRYLAVCHPLRSLQQPGQSTYLLIAAPWLLAAIFSLPQVFIFSLREVIQGSGVLDCWADFGFPWGPRAYLTWTTLAIFVLPVTMLTACYSLICHEICKNLKVKTQAWRVGGGGWRTWDRPSPSTLAATTRGLPSRVSSINTISRAKIRTVKMTFVIVLAYIACWAPFFSVQMWSVWDKNAPDEDSTNVAFTISMLLGNLNSCCNPWIYMGFNSHLLPRPLRHLACCGGPQPRMRRRLSDGSLSSRHTTLLTRSSCPATLSLSLSLTLSGRPRPEESPRDLELADGEGTAETIIF</sequence>
<organism>
    <name type="scientific">Homo sapiens</name>
    <name type="common">Human</name>
    <dbReference type="NCBI Taxonomy" id="9606"/>
    <lineage>
        <taxon>Eukaryota</taxon>
        <taxon>Metazoa</taxon>
        <taxon>Chordata</taxon>
        <taxon>Craniata</taxon>
        <taxon>Vertebrata</taxon>
        <taxon>Euteleostomi</taxon>
        <taxon>Mammalia</taxon>
        <taxon>Eutheria</taxon>
        <taxon>Euarchontoglires</taxon>
        <taxon>Primates</taxon>
        <taxon>Haplorrhini</taxon>
        <taxon>Catarrhini</taxon>
        <taxon>Hominidae</taxon>
        <taxon>Homo</taxon>
    </lineage>
</organism>
<protein>
    <recommendedName>
        <fullName evidence="7">Vasopressin V1b receptor</fullName>
        <shortName>V1bR</shortName>
    </recommendedName>
    <alternativeName>
        <fullName>AVPR V1b</fullName>
    </alternativeName>
    <alternativeName>
        <fullName>AVPR V3</fullName>
    </alternativeName>
    <alternativeName>
        <fullName>Antidiuretic hormone receptor 1b</fullName>
    </alternativeName>
    <alternativeName>
        <fullName>Vasopressin V3 receptor</fullName>
    </alternativeName>
</protein>
<keyword id="KW-1003">Cell membrane</keyword>
<keyword id="KW-1015">Disulfide bond</keyword>
<keyword id="KW-0297">G-protein coupled receptor</keyword>
<keyword id="KW-0325">Glycoprotein</keyword>
<keyword id="KW-0472">Membrane</keyword>
<keyword id="KW-1267">Proteomics identification</keyword>
<keyword id="KW-0675">Receptor</keyword>
<keyword id="KW-1185">Reference proteome</keyword>
<keyword id="KW-0807">Transducer</keyword>
<keyword id="KW-0812">Transmembrane</keyword>
<keyword id="KW-1133">Transmembrane helix</keyword>
<evidence type="ECO:0000255" key="1"/>
<evidence type="ECO:0000255" key="2">
    <source>
        <dbReference type="PROSITE-ProRule" id="PRU00521"/>
    </source>
</evidence>
<evidence type="ECO:0000256" key="3">
    <source>
        <dbReference type="SAM" id="MobiDB-lite"/>
    </source>
</evidence>
<evidence type="ECO:0000269" key="4">
    <source>
    </source>
</evidence>
<evidence type="ECO:0000269" key="5">
    <source>
    </source>
</evidence>
<evidence type="ECO:0000269" key="6">
    <source ref="7"/>
</evidence>
<evidence type="ECO:0000305" key="7"/>
<evidence type="ECO:0000312" key="8">
    <source>
        <dbReference type="HGNC" id="HGNC:896"/>
    </source>
</evidence>
<gene>
    <name evidence="8" type="primary">AVPR1B</name>
    <name type="synonym">AVPR3</name>
    <name type="synonym">VPR3</name>
</gene>
<dbReference type="EMBL" id="D31833">
    <property type="protein sequence ID" value="BAA06621.1"/>
    <property type="molecule type" value="mRNA"/>
</dbReference>
<dbReference type="EMBL" id="L37112">
    <property type="protein sequence ID" value="AAA65687.1"/>
    <property type="molecule type" value="mRNA"/>
</dbReference>
<dbReference type="EMBL" id="AF030512">
    <property type="protein sequence ID" value="AAB84293.1"/>
    <property type="molecule type" value="mRNA"/>
</dbReference>
<dbReference type="EMBL" id="AF101726">
    <property type="protein sequence ID" value="AAD17892.1"/>
    <property type="molecule type" value="mRNA"/>
</dbReference>
<dbReference type="EMBL" id="AF152238">
    <property type="protein sequence ID" value="AAF33681.1"/>
    <property type="molecule type" value="Genomic_DNA"/>
</dbReference>
<dbReference type="EMBL" id="EU432111">
    <property type="protein sequence ID" value="ABY87910.1"/>
    <property type="molecule type" value="mRNA"/>
</dbReference>
<dbReference type="EMBL" id="DQ194816">
    <property type="protein sequence ID" value="ABA03171.1"/>
    <property type="molecule type" value="Genomic_DNA"/>
</dbReference>
<dbReference type="EMBL" id="BX571818">
    <property type="status" value="NOT_ANNOTATED_CDS"/>
    <property type="molecule type" value="Genomic_DNA"/>
</dbReference>
<dbReference type="CCDS" id="CCDS73015.1"/>
<dbReference type="PIR" id="A55089">
    <property type="entry name" value="A55089"/>
</dbReference>
<dbReference type="RefSeq" id="NP_000698.1">
    <property type="nucleotide sequence ID" value="NM_000707.5"/>
</dbReference>
<dbReference type="SMR" id="P47901"/>
<dbReference type="BioGRID" id="107034">
    <property type="interactions" value="31"/>
</dbReference>
<dbReference type="CORUM" id="P47901"/>
<dbReference type="FunCoup" id="P47901">
    <property type="interactions" value="1161"/>
</dbReference>
<dbReference type="IntAct" id="P47901">
    <property type="interactions" value="27"/>
</dbReference>
<dbReference type="STRING" id="9606.ENSP00000356094"/>
<dbReference type="BindingDB" id="P47901"/>
<dbReference type="ChEMBL" id="CHEMBL1921"/>
<dbReference type="DrugBank" id="DB09059">
    <property type="generic name" value="Atosiban"/>
</dbReference>
<dbReference type="DrugBank" id="DB00035">
    <property type="generic name" value="Desmopressin"/>
</dbReference>
<dbReference type="DrugBank" id="DB14642">
    <property type="generic name" value="Lypressin"/>
</dbReference>
<dbReference type="DrugBank" id="DB12643">
    <property type="generic name" value="Nelivaptan"/>
</dbReference>
<dbReference type="DrugBank" id="DB00107">
    <property type="generic name" value="Oxytocin"/>
</dbReference>
<dbReference type="DrugBank" id="DB05452">
    <property type="generic name" value="PH-284"/>
</dbReference>
<dbReference type="DrugBank" id="DB05455">
    <property type="generic name" value="SR 121463"/>
</dbReference>
<dbReference type="DrugBank" id="DB02638">
    <property type="generic name" value="Terlipressin"/>
</dbReference>
<dbReference type="DrugBank" id="DB00067">
    <property type="generic name" value="Vasopressin"/>
</dbReference>
<dbReference type="DrugCentral" id="P47901"/>
<dbReference type="GuidetoPHARMACOLOGY" id="367"/>
<dbReference type="TCDB" id="9.A.14.10.2">
    <property type="family name" value="the g-protein-coupled receptor (gpcr) family"/>
</dbReference>
<dbReference type="GlyCosmos" id="P47901">
    <property type="glycosylation" value="1 site, No reported glycans"/>
</dbReference>
<dbReference type="GlyGen" id="P47901">
    <property type="glycosylation" value="1 site"/>
</dbReference>
<dbReference type="iPTMnet" id="P47901"/>
<dbReference type="PhosphoSitePlus" id="P47901"/>
<dbReference type="BioMuta" id="AVPR1B"/>
<dbReference type="DMDM" id="1351392"/>
<dbReference type="MassIVE" id="P47901"/>
<dbReference type="PaxDb" id="9606-ENSP00000356094"/>
<dbReference type="PeptideAtlas" id="P47901"/>
<dbReference type="Antibodypedia" id="20687">
    <property type="antibodies" value="379 antibodies from 35 providers"/>
</dbReference>
<dbReference type="DNASU" id="553"/>
<dbReference type="Ensembl" id="ENST00000367126.5">
    <property type="protein sequence ID" value="ENSP00000356094.4"/>
    <property type="gene ID" value="ENSG00000198049.7"/>
</dbReference>
<dbReference type="GeneID" id="553"/>
<dbReference type="KEGG" id="hsa:553"/>
<dbReference type="MANE-Select" id="ENST00000367126.5">
    <property type="protein sequence ID" value="ENSP00000356094.4"/>
    <property type="RefSeq nucleotide sequence ID" value="NM_000707.5"/>
    <property type="RefSeq protein sequence ID" value="NP_000698.1"/>
</dbReference>
<dbReference type="UCSC" id="uc001hds.3">
    <property type="organism name" value="human"/>
</dbReference>
<dbReference type="AGR" id="HGNC:896"/>
<dbReference type="CTD" id="553"/>
<dbReference type="DisGeNET" id="553"/>
<dbReference type="GeneCards" id="AVPR1B"/>
<dbReference type="HGNC" id="HGNC:896">
    <property type="gene designation" value="AVPR1B"/>
</dbReference>
<dbReference type="HPA" id="ENSG00000198049">
    <property type="expression patterns" value="Tissue enriched (pituitary)"/>
</dbReference>
<dbReference type="MIM" id="600264">
    <property type="type" value="gene"/>
</dbReference>
<dbReference type="neXtProt" id="NX_P47901"/>
<dbReference type="OpenTargets" id="ENSG00000198049"/>
<dbReference type="PharmGKB" id="PA25188"/>
<dbReference type="VEuPathDB" id="HostDB:ENSG00000198049"/>
<dbReference type="eggNOG" id="KOG3656">
    <property type="taxonomic scope" value="Eukaryota"/>
</dbReference>
<dbReference type="GeneTree" id="ENSGT01050000244882"/>
<dbReference type="HOGENOM" id="CLU_009579_15_3_1"/>
<dbReference type="InParanoid" id="P47901"/>
<dbReference type="OMA" id="FNSHLWP"/>
<dbReference type="OrthoDB" id="6435638at2759"/>
<dbReference type="PAN-GO" id="P47901">
    <property type="GO annotations" value="6 GO annotations based on evolutionary models"/>
</dbReference>
<dbReference type="PhylomeDB" id="P47901"/>
<dbReference type="TreeFam" id="TF106499"/>
<dbReference type="PathwayCommons" id="P47901"/>
<dbReference type="Reactome" id="R-HSA-388479">
    <property type="pathway name" value="Vasopressin-like receptors"/>
</dbReference>
<dbReference type="Reactome" id="R-HSA-416476">
    <property type="pathway name" value="G alpha (q) signalling events"/>
</dbReference>
<dbReference type="Reactome" id="R-HSA-5619099">
    <property type="pathway name" value="Defective AVP does not bind AVPR1A,B and causes neurohypophyseal diabetes insipidus (NDI)"/>
</dbReference>
<dbReference type="SignaLink" id="P47901"/>
<dbReference type="SIGNOR" id="P47901"/>
<dbReference type="BioGRID-ORCS" id="553">
    <property type="hits" value="13 hits in 1155 CRISPR screens"/>
</dbReference>
<dbReference type="GeneWiki" id="Arginine_vasopressin_receptor_1B"/>
<dbReference type="GenomeRNAi" id="553"/>
<dbReference type="Pharos" id="P47901">
    <property type="development level" value="Tclin"/>
</dbReference>
<dbReference type="PRO" id="PR:P47901"/>
<dbReference type="Proteomes" id="UP000005640">
    <property type="component" value="Chromosome 1"/>
</dbReference>
<dbReference type="RNAct" id="P47901">
    <property type="molecule type" value="protein"/>
</dbReference>
<dbReference type="Bgee" id="ENSG00000198049">
    <property type="expression patterns" value="Expressed in adenohypophysis and 43 other cell types or tissues"/>
</dbReference>
<dbReference type="GO" id="GO:0005768">
    <property type="term" value="C:endosome"/>
    <property type="evidence" value="ECO:0000304"/>
    <property type="project" value="ProtInc"/>
</dbReference>
<dbReference type="GO" id="GO:0005794">
    <property type="term" value="C:Golgi apparatus"/>
    <property type="evidence" value="ECO:0000314"/>
    <property type="project" value="ARUK-UCL"/>
</dbReference>
<dbReference type="GO" id="GO:0005886">
    <property type="term" value="C:plasma membrane"/>
    <property type="evidence" value="ECO:0000314"/>
    <property type="project" value="UniProtKB"/>
</dbReference>
<dbReference type="GO" id="GO:0005080">
    <property type="term" value="F:protein kinase C binding"/>
    <property type="evidence" value="ECO:0000304"/>
    <property type="project" value="ProtInc"/>
</dbReference>
<dbReference type="GO" id="GO:0005000">
    <property type="term" value="F:vasopressin receptor activity"/>
    <property type="evidence" value="ECO:0000314"/>
    <property type="project" value="ARUK-UCL"/>
</dbReference>
<dbReference type="GO" id="GO:0032870">
    <property type="term" value="P:cellular response to hormone stimulus"/>
    <property type="evidence" value="ECO:0000318"/>
    <property type="project" value="GO_Central"/>
</dbReference>
<dbReference type="GO" id="GO:0007186">
    <property type="term" value="P:G protein-coupled receptor signaling pathway"/>
    <property type="evidence" value="ECO:0000314"/>
    <property type="project" value="ARUK-UCL"/>
</dbReference>
<dbReference type="GO" id="GO:0007200">
    <property type="term" value="P:phospholipase C-activating G protein-coupled receptor signaling pathway"/>
    <property type="evidence" value="ECO:0000314"/>
    <property type="project" value="ARUK-UCL"/>
</dbReference>
<dbReference type="GO" id="GO:0090238">
    <property type="term" value="P:positive regulation of arachidonate secretion"/>
    <property type="evidence" value="ECO:0000314"/>
    <property type="project" value="ARUK-UCL"/>
</dbReference>
<dbReference type="GO" id="GO:0007204">
    <property type="term" value="P:positive regulation of cytosolic calcium ion concentration"/>
    <property type="evidence" value="ECO:0000304"/>
    <property type="project" value="ProtInc"/>
</dbReference>
<dbReference type="GO" id="GO:0060732">
    <property type="term" value="P:positive regulation of inositol phosphate biosynthetic process"/>
    <property type="evidence" value="ECO:0000314"/>
    <property type="project" value="ARUK-UCL"/>
</dbReference>
<dbReference type="GO" id="GO:0043410">
    <property type="term" value="P:positive regulation of MAPK cascade"/>
    <property type="evidence" value="ECO:0000314"/>
    <property type="project" value="ARUK-UCL"/>
</dbReference>
<dbReference type="GO" id="GO:0045907">
    <property type="term" value="P:positive regulation of vasoconstriction"/>
    <property type="evidence" value="ECO:0000318"/>
    <property type="project" value="GO_Central"/>
</dbReference>
<dbReference type="GO" id="GO:0042127">
    <property type="term" value="P:regulation of cell population proliferation"/>
    <property type="evidence" value="ECO:0000314"/>
    <property type="project" value="ARUK-UCL"/>
</dbReference>
<dbReference type="GO" id="GO:0001992">
    <property type="term" value="P:regulation of systemic arterial blood pressure by vasopressin"/>
    <property type="evidence" value="ECO:0000318"/>
    <property type="project" value="GO_Central"/>
</dbReference>
<dbReference type="GO" id="GO:0046718">
    <property type="term" value="P:symbiont entry into host cell"/>
    <property type="evidence" value="ECO:0000314"/>
    <property type="project" value="UniProtKB"/>
</dbReference>
<dbReference type="GO" id="GO:0150104">
    <property type="term" value="P:transport across blood-brain barrier"/>
    <property type="evidence" value="ECO:0000303"/>
    <property type="project" value="ARUK-UCL"/>
</dbReference>
<dbReference type="CDD" id="cd15386">
    <property type="entry name" value="7tmA_V1bR"/>
    <property type="match status" value="1"/>
</dbReference>
<dbReference type="FunFam" id="1.20.1070.10:FF:000094">
    <property type="entry name" value="Vasopressin V1a receptor"/>
    <property type="match status" value="1"/>
</dbReference>
<dbReference type="Gene3D" id="1.20.1070.10">
    <property type="entry name" value="Rhodopsin 7-helix transmembrane proteins"/>
    <property type="match status" value="1"/>
</dbReference>
<dbReference type="InterPro" id="IPR000276">
    <property type="entry name" value="GPCR_Rhodpsn"/>
</dbReference>
<dbReference type="InterPro" id="IPR017452">
    <property type="entry name" value="GPCR_Rhodpsn_7TM"/>
</dbReference>
<dbReference type="InterPro" id="IPR015076">
    <property type="entry name" value="V1R_C"/>
</dbReference>
<dbReference type="InterPro" id="IPR001817">
    <property type="entry name" value="Vasoprsn_rcpt"/>
</dbReference>
<dbReference type="InterPro" id="IPR000628">
    <property type="entry name" value="Vprs_rcpt_V1B"/>
</dbReference>
<dbReference type="PANTHER" id="PTHR24241">
    <property type="entry name" value="NEUROPEPTIDE RECEPTOR-RELATED G-PROTEIN COUPLED RECEPTOR"/>
    <property type="match status" value="1"/>
</dbReference>
<dbReference type="PANTHER" id="PTHR24241:SF18">
    <property type="entry name" value="VASOPRESSIN V1B RECEPTOR"/>
    <property type="match status" value="1"/>
</dbReference>
<dbReference type="Pfam" id="PF00001">
    <property type="entry name" value="7tm_1"/>
    <property type="match status" value="1"/>
</dbReference>
<dbReference type="PRINTS" id="PR00237">
    <property type="entry name" value="GPCRRHODOPSN"/>
</dbReference>
<dbReference type="PRINTS" id="PR00896">
    <property type="entry name" value="VASOPRESSINR"/>
</dbReference>
<dbReference type="PRINTS" id="PR00897">
    <property type="entry name" value="VASOPRSNV1BR"/>
</dbReference>
<dbReference type="SMART" id="SM01164">
    <property type="entry name" value="DUF1856"/>
    <property type="match status" value="1"/>
</dbReference>
<dbReference type="SUPFAM" id="SSF81321">
    <property type="entry name" value="Family A G protein-coupled receptor-like"/>
    <property type="match status" value="1"/>
</dbReference>
<dbReference type="PROSITE" id="PS00237">
    <property type="entry name" value="G_PROTEIN_RECEP_F1_1"/>
    <property type="match status" value="1"/>
</dbReference>
<dbReference type="PROSITE" id="PS50262">
    <property type="entry name" value="G_PROTEIN_RECEP_F1_2"/>
    <property type="match status" value="1"/>
</dbReference>
<comment type="function">
    <text>Receptor for arginine vasopressin. The activity of this receptor is mediated by G proteins which activate a phosphatidyl-inositol-calcium second messenger system.</text>
</comment>
<comment type="function">
    <text evidence="5">(Microbial infection) During SARS coronavirus-2/SARS-CoV-2 infection, may recognize and internalize the complex formed by AVP/Arg-vasopressin, SARS-CoV-2 spike protein and secreted ACE2 through DNM2/dynamin 2-dependent endocytosis.</text>
</comment>
<comment type="subcellular location">
    <subcellularLocation>
        <location evidence="5">Cell membrane</location>
        <topology evidence="1">Multi-pass membrane protein</topology>
    </subcellularLocation>
</comment>
<comment type="similarity">
    <text evidence="2">Belongs to the G-protein coupled receptor 1 family. Vasopressin/oxytocin receptor subfamily.</text>
</comment>
<feature type="chain" id="PRO_0000070203" description="Vasopressin V1b receptor">
    <location>
        <begin position="1"/>
        <end position="424"/>
    </location>
</feature>
<feature type="topological domain" description="Extracellular" evidence="1">
    <location>
        <begin position="1"/>
        <end position="35"/>
    </location>
</feature>
<feature type="transmembrane region" description="Helical; Name=1" evidence="1">
    <location>
        <begin position="36"/>
        <end position="59"/>
    </location>
</feature>
<feature type="topological domain" description="Cytoplasmic" evidence="1">
    <location>
        <begin position="60"/>
        <end position="71"/>
    </location>
</feature>
<feature type="transmembrane region" description="Helical; Name=2" evidence="1">
    <location>
        <begin position="72"/>
        <end position="93"/>
    </location>
</feature>
<feature type="topological domain" description="Extracellular" evidence="1">
    <location>
        <begin position="94"/>
        <end position="108"/>
    </location>
</feature>
<feature type="transmembrane region" description="Helical; Name=3" evidence="1">
    <location>
        <begin position="109"/>
        <end position="130"/>
    </location>
</feature>
<feature type="topological domain" description="Cytoplasmic" evidence="1">
    <location>
        <begin position="131"/>
        <end position="151"/>
    </location>
</feature>
<feature type="transmembrane region" description="Helical; Name=4" evidence="1">
    <location>
        <begin position="152"/>
        <end position="173"/>
    </location>
</feature>
<feature type="topological domain" description="Extracellular" evidence="1">
    <location>
        <begin position="174"/>
        <end position="201"/>
    </location>
</feature>
<feature type="transmembrane region" description="Helical; Name=5" evidence="1">
    <location>
        <begin position="202"/>
        <end position="222"/>
    </location>
</feature>
<feature type="topological domain" description="Cytoplasmic" evidence="1">
    <location>
        <begin position="223"/>
        <end position="283"/>
    </location>
</feature>
<feature type="transmembrane region" description="Helical; Name=6" evidence="1">
    <location>
        <begin position="284"/>
        <end position="303"/>
    </location>
</feature>
<feature type="topological domain" description="Extracellular" evidence="1">
    <location>
        <begin position="304"/>
        <end position="321"/>
    </location>
</feature>
<feature type="transmembrane region" description="Helical; Name=7" evidence="1">
    <location>
        <begin position="322"/>
        <end position="341"/>
    </location>
</feature>
<feature type="topological domain" description="Cytoplasmic" evidence="1">
    <location>
        <begin position="342"/>
        <end position="424"/>
    </location>
</feature>
<feature type="region of interest" description="Disordered" evidence="3">
    <location>
        <begin position="1"/>
        <end position="22"/>
    </location>
</feature>
<feature type="region of interest" description="Disordered" evidence="3">
    <location>
        <begin position="398"/>
        <end position="417"/>
    </location>
</feature>
<feature type="compositionally biased region" description="Polar residues" evidence="3">
    <location>
        <begin position="13"/>
        <end position="22"/>
    </location>
</feature>
<feature type="compositionally biased region" description="Basic and acidic residues" evidence="3">
    <location>
        <begin position="401"/>
        <end position="411"/>
    </location>
</feature>
<feature type="glycosylation site" description="N-linked (GlcNAc...) asparagine" evidence="1">
    <location>
        <position position="21"/>
    </location>
</feature>
<feature type="disulfide bond" evidence="2">
    <location>
        <begin position="107"/>
        <end position="186"/>
    </location>
</feature>
<feature type="sequence variant" id="VAR_025159" description="In dbSNP:rs35369693." evidence="4 6">
    <original>K</original>
    <variation>N</variation>
    <location>
        <position position="65"/>
    </location>
</feature>
<feature type="sequence variant" id="VAR_025160" description="In dbSNP:rs33990840." evidence="6">
    <original>G</original>
    <variation>R</variation>
    <location>
        <position position="191"/>
    </location>
</feature>
<feature type="sequence variant" id="VAR_061228" description="In dbSNP:rs3891058.">
    <original>H</original>
    <variation>Q</variation>
    <location>
        <position position="224"/>
    </location>
</feature>
<feature type="sequence variant" id="VAR_025161" description="In dbSNP:rs36030374." evidence="6">
    <original>S</original>
    <variation>G</variation>
    <location>
        <position position="267"/>
    </location>
</feature>
<feature type="sequence variant" id="VAR_025162" description="In dbSNP:rs28632197." evidence="4 6">
    <original>R</original>
    <variation>H</variation>
    <location>
        <position position="364"/>
    </location>
</feature>
<accession>P47901</accession>
<accession>B0M0J6</accession>
<accession>Q5TZ00</accession>
<proteinExistence type="evidence at protein level"/>
<name>V1BR_HUMAN</name>
<reference key="1">
    <citation type="journal article" date="1994" name="J. Biol. Chem.">
        <title>Molecular cloning and functional expression of a cDNA encoding the human V1b vasopressin receptor.</title>
        <authorList>
            <person name="Sugimoto T."/>
            <person name="Saito M."/>
            <person name="Mochizuki S."/>
            <person name="Watanabe Y."/>
            <person name="Hashimoto S."/>
            <person name="Kawashima H."/>
        </authorList>
    </citation>
    <scope>NUCLEOTIDE SEQUENCE [MRNA]</scope>
    <source>
        <tissue>Pituitary</tissue>
    </source>
</reference>
<reference key="2">
    <citation type="journal article" date="1994" name="FEBS Lett.">
        <title>Cloning and characterization of the human V3 pituitary vasopressin receptor.</title>
        <authorList>
            <person name="de Keyzer Y."/>
            <person name="Auzan C."/>
            <person name="Lenne F."/>
            <person name="Beldjord C."/>
            <person name="Thibonnier M."/>
            <person name="Bertagna X."/>
            <person name="Clauser E."/>
        </authorList>
    </citation>
    <scope>NUCLEOTIDE SEQUENCE [MRNA]</scope>
    <source>
        <tissue>Pituitary</tissue>
    </source>
</reference>
<reference key="3">
    <citation type="journal article" date="1997" name="Peptides">
        <title>Functional vasopressin V1 type receptors are present in variant as well as classical forms of small-cell carcinoma.</title>
        <authorList>
            <person name="North W.G."/>
            <person name="Fay M.J."/>
            <person name="Longo K.A."/>
            <person name="Du J."/>
        </authorList>
    </citation>
    <scope>NUCLEOTIDE SEQUENCE [MRNA]</scope>
    <source>
        <tissue>Lung carcinoma</tissue>
    </source>
</reference>
<reference key="4">
    <citation type="journal article" date="1998" name="Cancer Res.">
        <title>Expression of all known vasopressin receptor subtypes by small cell tumors implies a multifaceted role for this neuropeptide.</title>
        <authorList>
            <person name="North W.G."/>
            <person name="Fay M.J."/>
            <person name="Longo K.A."/>
            <person name="Du J."/>
        </authorList>
    </citation>
    <scope>NUCLEOTIDE SEQUENCE [MRNA]</scope>
</reference>
<reference key="5">
    <citation type="journal article" date="2000" name="Gene">
        <title>Nucleotide sequence and structural organization of the human vasopressin pituitary receptor (V3) gene.</title>
        <authorList>
            <person name="Rene P."/>
            <person name="Lenne F."/>
            <person name="Ventura M.A."/>
            <person name="Bertagna X."/>
            <person name="de Keyzer Y."/>
        </authorList>
    </citation>
    <scope>NUCLEOTIDE SEQUENCE [GENOMIC DNA]</scope>
</reference>
<reference key="6">
    <citation type="submission" date="2007-12" db="EMBL/GenBank/DDBJ databases">
        <authorList>
            <person name="Kaighin V.A."/>
            <person name="Martin A.L."/>
            <person name="Aronstam R.S."/>
        </authorList>
    </citation>
    <scope>NUCLEOTIDE SEQUENCE [MRNA]</scope>
    <source>
        <tissue>Brain</tissue>
    </source>
</reference>
<reference key="7">
    <citation type="submission" date="2005-09" db="EMBL/GenBank/DDBJ databases">
        <authorList>
            <consortium name="SeattleSNPs variation discovery resource"/>
        </authorList>
    </citation>
    <scope>NUCLEOTIDE SEQUENCE [GENOMIC DNA]</scope>
    <scope>VARIANTS ASN-65; ARG-191; GLY-267 AND HIS-364</scope>
</reference>
<reference key="8">
    <citation type="journal article" date="2006" name="Nature">
        <title>The DNA sequence and biological annotation of human chromosome 1.</title>
        <authorList>
            <person name="Gregory S.G."/>
            <person name="Barlow K.F."/>
            <person name="McLay K.E."/>
            <person name="Kaul R."/>
            <person name="Swarbreck D."/>
            <person name="Dunham A."/>
            <person name="Scott C.E."/>
            <person name="Howe K.L."/>
            <person name="Woodfine K."/>
            <person name="Spencer C.C.A."/>
            <person name="Jones M.C."/>
            <person name="Gillson C."/>
            <person name="Searle S."/>
            <person name="Zhou Y."/>
            <person name="Kokocinski F."/>
            <person name="McDonald L."/>
            <person name="Evans R."/>
            <person name="Phillips K."/>
            <person name="Atkinson A."/>
            <person name="Cooper R."/>
            <person name="Jones C."/>
            <person name="Hall R.E."/>
            <person name="Andrews T.D."/>
            <person name="Lloyd C."/>
            <person name="Ainscough R."/>
            <person name="Almeida J.P."/>
            <person name="Ambrose K.D."/>
            <person name="Anderson F."/>
            <person name="Andrew R.W."/>
            <person name="Ashwell R.I.S."/>
            <person name="Aubin K."/>
            <person name="Babbage A.K."/>
            <person name="Bagguley C.L."/>
            <person name="Bailey J."/>
            <person name="Beasley H."/>
            <person name="Bethel G."/>
            <person name="Bird C.P."/>
            <person name="Bray-Allen S."/>
            <person name="Brown J.Y."/>
            <person name="Brown A.J."/>
            <person name="Buckley D."/>
            <person name="Burton J."/>
            <person name="Bye J."/>
            <person name="Carder C."/>
            <person name="Chapman J.C."/>
            <person name="Clark S.Y."/>
            <person name="Clarke G."/>
            <person name="Clee C."/>
            <person name="Cobley V."/>
            <person name="Collier R.E."/>
            <person name="Corby N."/>
            <person name="Coville G.J."/>
            <person name="Davies J."/>
            <person name="Deadman R."/>
            <person name="Dunn M."/>
            <person name="Earthrowl M."/>
            <person name="Ellington A.G."/>
            <person name="Errington H."/>
            <person name="Frankish A."/>
            <person name="Frankland J."/>
            <person name="French L."/>
            <person name="Garner P."/>
            <person name="Garnett J."/>
            <person name="Gay L."/>
            <person name="Ghori M.R.J."/>
            <person name="Gibson R."/>
            <person name="Gilby L.M."/>
            <person name="Gillett W."/>
            <person name="Glithero R.J."/>
            <person name="Grafham D.V."/>
            <person name="Griffiths C."/>
            <person name="Griffiths-Jones S."/>
            <person name="Grocock R."/>
            <person name="Hammond S."/>
            <person name="Harrison E.S.I."/>
            <person name="Hart E."/>
            <person name="Haugen E."/>
            <person name="Heath P.D."/>
            <person name="Holmes S."/>
            <person name="Holt K."/>
            <person name="Howden P.J."/>
            <person name="Hunt A.R."/>
            <person name="Hunt S.E."/>
            <person name="Hunter G."/>
            <person name="Isherwood J."/>
            <person name="James R."/>
            <person name="Johnson C."/>
            <person name="Johnson D."/>
            <person name="Joy A."/>
            <person name="Kay M."/>
            <person name="Kershaw J.K."/>
            <person name="Kibukawa M."/>
            <person name="Kimberley A.M."/>
            <person name="King A."/>
            <person name="Knights A.J."/>
            <person name="Lad H."/>
            <person name="Laird G."/>
            <person name="Lawlor S."/>
            <person name="Leongamornlert D.A."/>
            <person name="Lloyd D.M."/>
            <person name="Loveland J."/>
            <person name="Lovell J."/>
            <person name="Lush M.J."/>
            <person name="Lyne R."/>
            <person name="Martin S."/>
            <person name="Mashreghi-Mohammadi M."/>
            <person name="Matthews L."/>
            <person name="Matthews N.S.W."/>
            <person name="McLaren S."/>
            <person name="Milne S."/>
            <person name="Mistry S."/>
            <person name="Moore M.J.F."/>
            <person name="Nickerson T."/>
            <person name="O'Dell C.N."/>
            <person name="Oliver K."/>
            <person name="Palmeiri A."/>
            <person name="Palmer S.A."/>
            <person name="Parker A."/>
            <person name="Patel D."/>
            <person name="Pearce A.V."/>
            <person name="Peck A.I."/>
            <person name="Pelan S."/>
            <person name="Phelps K."/>
            <person name="Phillimore B.J."/>
            <person name="Plumb R."/>
            <person name="Rajan J."/>
            <person name="Raymond C."/>
            <person name="Rouse G."/>
            <person name="Saenphimmachak C."/>
            <person name="Sehra H.K."/>
            <person name="Sheridan E."/>
            <person name="Shownkeen R."/>
            <person name="Sims S."/>
            <person name="Skuce C.D."/>
            <person name="Smith M."/>
            <person name="Steward C."/>
            <person name="Subramanian S."/>
            <person name="Sycamore N."/>
            <person name="Tracey A."/>
            <person name="Tromans A."/>
            <person name="Van Helmond Z."/>
            <person name="Wall M."/>
            <person name="Wallis J.M."/>
            <person name="White S."/>
            <person name="Whitehead S.L."/>
            <person name="Wilkinson J.E."/>
            <person name="Willey D.L."/>
            <person name="Williams H."/>
            <person name="Wilming L."/>
            <person name="Wray P.W."/>
            <person name="Wu Z."/>
            <person name="Coulson A."/>
            <person name="Vaudin M."/>
            <person name="Sulston J.E."/>
            <person name="Durbin R.M."/>
            <person name="Hubbard T."/>
            <person name="Wooster R."/>
            <person name="Dunham I."/>
            <person name="Carter N.P."/>
            <person name="McVean G."/>
            <person name="Ross M.T."/>
            <person name="Harrow J."/>
            <person name="Olson M.V."/>
            <person name="Beck S."/>
            <person name="Rogers J."/>
            <person name="Bentley D.R."/>
        </authorList>
    </citation>
    <scope>NUCLEOTIDE SEQUENCE [LARGE SCALE GENOMIC DNA]</scope>
</reference>
<reference key="9">
    <citation type="journal article" date="2021" name="Cell">
        <title>Soluble ACE2-mediated cell entry of SARS-CoV-2 via interaction with proteins related to the renin-angiotensin system.</title>
        <authorList>
            <person name="Yeung M.L."/>
            <person name="Teng J.L.L."/>
            <person name="Jia L."/>
            <person name="Zhang C."/>
            <person name="Huang C."/>
            <person name="Cai J.P."/>
            <person name="Zhou R."/>
            <person name="Chan K.H."/>
            <person name="Zhao H."/>
            <person name="Zhu L."/>
            <person name="Siu K.L."/>
            <person name="Fung S.Y."/>
            <person name="Yung S."/>
            <person name="Chan T.M."/>
            <person name="To K.K."/>
            <person name="Chan J.F."/>
            <person name="Cai Z."/>
            <person name="Lau S.K.P."/>
            <person name="Chen Z."/>
            <person name="Jin D.Y."/>
            <person name="Woo P.C.Y."/>
            <person name="Yuen K.Y."/>
        </authorList>
    </citation>
    <scope>FUNCTION</scope>
    <scope>INTERACTION WITH SARS-COV-2 SPIKE GLYCOPROTEIN (MICROBIAL FUNCTION)</scope>
    <scope>SUBCELLULAR LOCATION</scope>
</reference>
<reference key="10">
    <citation type="journal article" date="2007" name="Arch. Gen. Psychiatry">
        <title>Evidence of an association between the vasopressin V1b receptor gene (AVPR1B) and childhood-onset mood disorders.</title>
        <authorList>
            <person name="Dempster E.L."/>
            <person name="Burcescu I."/>
            <person name="Wigg K."/>
            <person name="Kiss E."/>
            <person name="Baji I."/>
            <person name="Gadoros J."/>
            <person name="Tamas Z."/>
            <person name="Kennedy J.L."/>
            <person name="Vetro A."/>
            <person name="Kovacs M."/>
            <person name="Barr C.L."/>
        </authorList>
    </citation>
    <scope>VARIANTS ASN-65 AND HIS-364</scope>
</reference>